<sequence length="143" mass="16528">MNCFSFSFIIIVLCAGSSNAKFREKNSVVFKNSLGVKNVLKIHCTSKDDDLGYHYLRPGVQIYEFRFHDSVLKTKFDCELWQGRGPTYKFYANFRAYKSGGLIAHYGKKNIWEAREDGIYFTHGKEIPKLEYKWSPIGKPPSP</sequence>
<comment type="subcellular location">
    <subcellularLocation>
        <location evidence="4">Secreted</location>
    </subcellularLocation>
</comment>
<comment type="similarity">
    <text evidence="3">Belongs to the plant self-incompatibility (S1) protein family.</text>
</comment>
<name>SPH11_ARATH</name>
<dbReference type="EMBL" id="AC002391">
    <property type="status" value="NOT_ANNOTATED_CDS"/>
    <property type="molecule type" value="Genomic_DNA"/>
</dbReference>
<dbReference type="EMBL" id="AC004401">
    <property type="status" value="NOT_ANNOTATED_CDS"/>
    <property type="molecule type" value="Genomic_DNA"/>
</dbReference>
<dbReference type="EMBL" id="CP002685">
    <property type="protein sequence ID" value="AEC07420.1"/>
    <property type="molecule type" value="Genomic_DNA"/>
</dbReference>
<dbReference type="RefSeq" id="NP_001118369.1">
    <property type="nucleotide sequence ID" value="NM_001124897.2"/>
</dbReference>
<dbReference type="SMR" id="B3H4B5"/>
<dbReference type="STRING" id="3702.B3H4B5"/>
<dbReference type="iPTMnet" id="B3H4B5"/>
<dbReference type="PaxDb" id="3702-AT2G23148.1"/>
<dbReference type="ProteomicsDB" id="245194"/>
<dbReference type="EnsemblPlants" id="AT2G23148.1">
    <property type="protein sequence ID" value="AT2G23148.1"/>
    <property type="gene ID" value="AT2G23148"/>
</dbReference>
<dbReference type="GeneID" id="6240551"/>
<dbReference type="Gramene" id="AT2G23148.1">
    <property type="protein sequence ID" value="AT2G23148.1"/>
    <property type="gene ID" value="AT2G23148"/>
</dbReference>
<dbReference type="KEGG" id="ath:AT2G23148"/>
<dbReference type="Araport" id="AT2G23148"/>
<dbReference type="TAIR" id="AT2G23148"/>
<dbReference type="HOGENOM" id="CLU_125658_3_0_1"/>
<dbReference type="InParanoid" id="B3H4B5"/>
<dbReference type="OMA" id="CELWQGR"/>
<dbReference type="PhylomeDB" id="B3H4B5"/>
<dbReference type="PRO" id="PR:B3H4B5"/>
<dbReference type="Proteomes" id="UP000006548">
    <property type="component" value="Chromosome 2"/>
</dbReference>
<dbReference type="ExpressionAtlas" id="B3H4B5">
    <property type="expression patterns" value="baseline"/>
</dbReference>
<dbReference type="GO" id="GO:0005576">
    <property type="term" value="C:extracellular region"/>
    <property type="evidence" value="ECO:0007669"/>
    <property type="project" value="UniProtKB-SubCell"/>
</dbReference>
<dbReference type="GO" id="GO:0060320">
    <property type="term" value="P:rejection of self pollen"/>
    <property type="evidence" value="ECO:0007669"/>
    <property type="project" value="UniProtKB-KW"/>
</dbReference>
<dbReference type="InterPro" id="IPR010264">
    <property type="entry name" value="Self-incomp_S1"/>
</dbReference>
<dbReference type="PANTHER" id="PTHR31232">
    <property type="match status" value="1"/>
</dbReference>
<dbReference type="PANTHER" id="PTHR31232:SF39">
    <property type="entry name" value="S-PROTEIN HOMOLOG-RELATED"/>
    <property type="match status" value="1"/>
</dbReference>
<dbReference type="Pfam" id="PF05938">
    <property type="entry name" value="Self-incomp_S1"/>
    <property type="match status" value="1"/>
</dbReference>
<keyword id="KW-1185">Reference proteome</keyword>
<keyword id="KW-0964">Secreted</keyword>
<keyword id="KW-0713">Self-incompatibility</keyword>
<keyword id="KW-0732">Signal</keyword>
<gene>
    <name evidence="2" type="primary">SPH11</name>
    <name evidence="5" type="ordered locus">At2g23148</name>
    <name evidence="3" type="ORF">F21P24</name>
    <name evidence="3" type="ORF">T20D16</name>
</gene>
<protein>
    <recommendedName>
        <fullName evidence="2">S-protein homolog 11</fullName>
    </recommendedName>
</protein>
<accession>B3H4B5</accession>
<evidence type="ECO:0000255" key="1"/>
<evidence type="ECO:0000303" key="2">
    <source>
    </source>
</evidence>
<evidence type="ECO:0000305" key="3"/>
<evidence type="ECO:0000305" key="4">
    <source>
    </source>
</evidence>
<evidence type="ECO:0000312" key="5">
    <source>
        <dbReference type="Araport" id="AT2G23148"/>
    </source>
</evidence>
<proteinExistence type="inferred from homology"/>
<feature type="signal peptide" evidence="1">
    <location>
        <begin position="1"/>
        <end position="20"/>
    </location>
</feature>
<feature type="chain" id="PRO_5002789080" description="S-protein homolog 11">
    <location>
        <begin position="21"/>
        <end position="143"/>
    </location>
</feature>
<organism>
    <name type="scientific">Arabidopsis thaliana</name>
    <name type="common">Mouse-ear cress</name>
    <dbReference type="NCBI Taxonomy" id="3702"/>
    <lineage>
        <taxon>Eukaryota</taxon>
        <taxon>Viridiplantae</taxon>
        <taxon>Streptophyta</taxon>
        <taxon>Embryophyta</taxon>
        <taxon>Tracheophyta</taxon>
        <taxon>Spermatophyta</taxon>
        <taxon>Magnoliopsida</taxon>
        <taxon>eudicotyledons</taxon>
        <taxon>Gunneridae</taxon>
        <taxon>Pentapetalae</taxon>
        <taxon>rosids</taxon>
        <taxon>malvids</taxon>
        <taxon>Brassicales</taxon>
        <taxon>Brassicaceae</taxon>
        <taxon>Camelineae</taxon>
        <taxon>Arabidopsis</taxon>
    </lineage>
</organism>
<reference key="1">
    <citation type="journal article" date="1999" name="Nature">
        <title>Sequence and analysis of chromosome 2 of the plant Arabidopsis thaliana.</title>
        <authorList>
            <person name="Lin X."/>
            <person name="Kaul S."/>
            <person name="Rounsley S.D."/>
            <person name="Shea T.P."/>
            <person name="Benito M.-I."/>
            <person name="Town C.D."/>
            <person name="Fujii C.Y."/>
            <person name="Mason T.M."/>
            <person name="Bowman C.L."/>
            <person name="Barnstead M.E."/>
            <person name="Feldblyum T.V."/>
            <person name="Buell C.R."/>
            <person name="Ketchum K.A."/>
            <person name="Lee J.J."/>
            <person name="Ronning C.M."/>
            <person name="Koo H.L."/>
            <person name="Moffat K.S."/>
            <person name="Cronin L.A."/>
            <person name="Shen M."/>
            <person name="Pai G."/>
            <person name="Van Aken S."/>
            <person name="Umayam L."/>
            <person name="Tallon L.J."/>
            <person name="Gill J.E."/>
            <person name="Adams M.D."/>
            <person name="Carrera A.J."/>
            <person name="Creasy T.H."/>
            <person name="Goodman H.M."/>
            <person name="Somerville C.R."/>
            <person name="Copenhaver G.P."/>
            <person name="Preuss D."/>
            <person name="Nierman W.C."/>
            <person name="White O."/>
            <person name="Eisen J.A."/>
            <person name="Salzberg S.L."/>
            <person name="Fraser C.M."/>
            <person name="Venter J.C."/>
        </authorList>
    </citation>
    <scope>NUCLEOTIDE SEQUENCE [LARGE SCALE GENOMIC DNA]</scope>
    <source>
        <strain>cv. Columbia</strain>
    </source>
</reference>
<reference key="2">
    <citation type="journal article" date="2017" name="Plant J.">
        <title>Araport11: a complete reannotation of the Arabidopsis thaliana reference genome.</title>
        <authorList>
            <person name="Cheng C.Y."/>
            <person name="Krishnakumar V."/>
            <person name="Chan A.P."/>
            <person name="Thibaud-Nissen F."/>
            <person name="Schobel S."/>
            <person name="Town C.D."/>
        </authorList>
    </citation>
    <scope>GENOME REANNOTATION</scope>
    <source>
        <strain>cv. Columbia</strain>
    </source>
</reference>
<reference key="3">
    <citation type="journal article" date="1999" name="Plant Mol. Biol.">
        <title>Analysis of Arabidopsis genome sequence reveals a large new gene family in plants.</title>
        <authorList>
            <person name="Ride J.P."/>
            <person name="Davies E.M."/>
            <person name="Franklin F.C.H."/>
            <person name="Marshall D.F."/>
        </authorList>
    </citation>
    <scope>GENE FAMILY</scope>
    <scope>NOMENCLATURE</scope>
    <source>
        <strain>cv. Columbia</strain>
    </source>
</reference>